<reference key="1">
    <citation type="journal article" date="1989" name="Curr. Genet.">
        <title>Two small open reading frames are co-transcribed with the pea chloroplast genes for the polypeptides of cytochrome b-559.</title>
        <authorList>
            <person name="Willey D.L."/>
            <person name="Gray J.C."/>
        </authorList>
    </citation>
    <scope>NUCLEOTIDE SEQUENCE [GENOMIC DNA]</scope>
</reference>
<comment type="function">
    <text evidence="1">One of the components of the core complex of photosystem II (PSII). PSII is a light-driven water:plastoquinone oxidoreductase that uses light energy to abstract electrons from H(2)O, generating O(2) and a proton gradient subsequently used for ATP formation. It consists of a core antenna complex that captures photons, and an electron transfer chain that converts photonic excitation into a charge separation.</text>
</comment>
<comment type="subunit">
    <text evidence="1">PSII is composed of 1 copy each of membrane proteins PsbA, PsbB, PsbC, PsbD, PsbE, PsbF, PsbH, PsbI, PsbJ, PsbK, PsbL, PsbM, PsbT, PsbX, PsbY, PsbZ, Psb30/Ycf12, at least 3 peripheral proteins of the oxygen-evolving complex and a large number of cofactors. It forms dimeric complexes.</text>
</comment>
<comment type="subcellular location">
    <subcellularLocation>
        <location evidence="1">Plastid</location>
        <location evidence="1">Chloroplast thylakoid membrane</location>
        <topology evidence="1">Single-pass membrane protein</topology>
    </subcellularLocation>
</comment>
<comment type="similarity">
    <text evidence="1">Belongs to the PsbJ family.</text>
</comment>
<proteinExistence type="evidence at protein level"/>
<gene>
    <name evidence="1" type="primary">psbJ</name>
</gene>
<sequence>MANTTGRIPLWIIGTVAGIVVIGLIGLFFYGSYSGLGSSL</sequence>
<accession>P13555</accession>
<organism>
    <name type="scientific">Pisum sativum</name>
    <name type="common">Garden pea</name>
    <name type="synonym">Lathyrus oleraceus</name>
    <dbReference type="NCBI Taxonomy" id="3888"/>
    <lineage>
        <taxon>Eukaryota</taxon>
        <taxon>Viridiplantae</taxon>
        <taxon>Streptophyta</taxon>
        <taxon>Embryophyta</taxon>
        <taxon>Tracheophyta</taxon>
        <taxon>Spermatophyta</taxon>
        <taxon>Magnoliopsida</taxon>
        <taxon>eudicotyledons</taxon>
        <taxon>Gunneridae</taxon>
        <taxon>Pentapetalae</taxon>
        <taxon>rosids</taxon>
        <taxon>fabids</taxon>
        <taxon>Fabales</taxon>
        <taxon>Fabaceae</taxon>
        <taxon>Papilionoideae</taxon>
        <taxon>50 kb inversion clade</taxon>
        <taxon>NPAAA clade</taxon>
        <taxon>Hologalegina</taxon>
        <taxon>IRL clade</taxon>
        <taxon>Fabeae</taxon>
        <taxon>Pisum</taxon>
    </lineage>
</organism>
<keyword id="KW-0002">3D-structure</keyword>
<keyword id="KW-0150">Chloroplast</keyword>
<keyword id="KW-0472">Membrane</keyword>
<keyword id="KW-0602">Photosynthesis</keyword>
<keyword id="KW-0604">Photosystem II</keyword>
<keyword id="KW-0934">Plastid</keyword>
<keyword id="KW-0674">Reaction center</keyword>
<keyword id="KW-0793">Thylakoid</keyword>
<keyword id="KW-0812">Transmembrane</keyword>
<keyword id="KW-1133">Transmembrane helix</keyword>
<geneLocation type="chloroplast"/>
<feature type="chain" id="PRO_0000216609" description="Photosystem II reaction center protein J">
    <location>
        <begin position="1"/>
        <end position="40"/>
    </location>
</feature>
<feature type="transmembrane region" description="Helical" evidence="1">
    <location>
        <begin position="8"/>
        <end position="28"/>
    </location>
</feature>
<feature type="helix" evidence="2">
    <location>
        <begin position="10"/>
        <end position="30"/>
    </location>
</feature>
<feature type="strand" evidence="2">
    <location>
        <begin position="33"/>
        <end position="35"/>
    </location>
</feature>
<feature type="turn" evidence="2">
    <location>
        <begin position="36"/>
        <end position="39"/>
    </location>
</feature>
<name>PSBJ_PEA</name>
<protein>
    <recommendedName>
        <fullName evidence="1">Photosystem II reaction center protein J</fullName>
        <shortName evidence="1">PSII-J</shortName>
    </recommendedName>
</protein>
<evidence type="ECO:0000255" key="1">
    <source>
        <dbReference type="HAMAP-Rule" id="MF_01305"/>
    </source>
</evidence>
<evidence type="ECO:0007829" key="2">
    <source>
        <dbReference type="PDB" id="5XNL"/>
    </source>
</evidence>
<dbReference type="EMBL" id="X15767">
    <property type="protein sequence ID" value="CAA33775.1"/>
    <property type="molecule type" value="Genomic_DNA"/>
</dbReference>
<dbReference type="PIR" id="D48310">
    <property type="entry name" value="D48310"/>
</dbReference>
<dbReference type="RefSeq" id="YP_003587554.1">
    <property type="nucleotide sequence ID" value="NC_014057.1"/>
</dbReference>
<dbReference type="PDB" id="5XNL">
    <property type="method" value="EM"/>
    <property type="resolution" value="2.70 A"/>
    <property type="chains" value="J/j=1-40"/>
</dbReference>
<dbReference type="PDB" id="5XNM">
    <property type="method" value="EM"/>
    <property type="resolution" value="3.20 A"/>
    <property type="chains" value="J/j=1-40"/>
</dbReference>
<dbReference type="PDB" id="6YP7">
    <property type="method" value="EM"/>
    <property type="resolution" value="3.80 A"/>
    <property type="chains" value="J/j=6-40"/>
</dbReference>
<dbReference type="PDBsum" id="5XNL"/>
<dbReference type="PDBsum" id="5XNM"/>
<dbReference type="PDBsum" id="6YP7"/>
<dbReference type="EMDB" id="EMD-10865"/>
<dbReference type="EMDB" id="EMD-6741"/>
<dbReference type="EMDB" id="EMD-6742"/>
<dbReference type="SMR" id="P13555"/>
<dbReference type="GeneID" id="9073102"/>
<dbReference type="GO" id="GO:0009535">
    <property type="term" value="C:chloroplast thylakoid membrane"/>
    <property type="evidence" value="ECO:0007669"/>
    <property type="project" value="UniProtKB-SubCell"/>
</dbReference>
<dbReference type="GO" id="GO:0009539">
    <property type="term" value="C:photosystem II reaction center"/>
    <property type="evidence" value="ECO:0007669"/>
    <property type="project" value="InterPro"/>
</dbReference>
<dbReference type="GO" id="GO:0015979">
    <property type="term" value="P:photosynthesis"/>
    <property type="evidence" value="ECO:0007669"/>
    <property type="project" value="UniProtKB-UniRule"/>
</dbReference>
<dbReference type="Gene3D" id="6.10.250.2070">
    <property type="match status" value="1"/>
</dbReference>
<dbReference type="HAMAP" id="MF_01305">
    <property type="entry name" value="PSII_PsbJ"/>
    <property type="match status" value="1"/>
</dbReference>
<dbReference type="InterPro" id="IPR002682">
    <property type="entry name" value="PSII_PsbJ"/>
</dbReference>
<dbReference type="InterPro" id="IPR037267">
    <property type="entry name" value="PSII_PsbJ_sf"/>
</dbReference>
<dbReference type="NCBIfam" id="NF002722">
    <property type="entry name" value="PRK02565.1"/>
    <property type="match status" value="1"/>
</dbReference>
<dbReference type="PANTHER" id="PTHR34812">
    <property type="entry name" value="PHOTOSYSTEM II REACTION CENTER PROTEIN J"/>
    <property type="match status" value="1"/>
</dbReference>
<dbReference type="PANTHER" id="PTHR34812:SF3">
    <property type="entry name" value="PHOTOSYSTEM II REACTION CENTER PROTEIN J"/>
    <property type="match status" value="1"/>
</dbReference>
<dbReference type="Pfam" id="PF01788">
    <property type="entry name" value="PsbJ"/>
    <property type="match status" value="1"/>
</dbReference>
<dbReference type="SUPFAM" id="SSF161021">
    <property type="entry name" value="Photosystem II reaction center protein J, PsbJ"/>
    <property type="match status" value="1"/>
</dbReference>